<keyword id="KW-1003">Cell membrane</keyword>
<keyword id="KW-0449">Lipoprotein</keyword>
<keyword id="KW-0472">Membrane</keyword>
<keyword id="KW-0488">Methylation</keyword>
<keyword id="KW-0636">Prenylation</keyword>
<keyword id="KW-1185">Reference proteome</keyword>
<keyword id="KW-0807">Transducer</keyword>
<proteinExistence type="inferred from homology"/>
<accession>Q61017</accession>
<accession>Q9CWL5</accession>
<dbReference type="EMBL" id="AK010554">
    <property type="protein sequence ID" value="BAB27023.1"/>
    <property type="molecule type" value="mRNA"/>
</dbReference>
<dbReference type="EMBL" id="U38500">
    <property type="protein sequence ID" value="AAB01731.1"/>
    <property type="molecule type" value="mRNA"/>
</dbReference>
<dbReference type="CCDS" id="CCDS25284.1"/>
<dbReference type="RefSeq" id="NP_001033753.2">
    <property type="nucleotide sequence ID" value="NM_001038664.2"/>
</dbReference>
<dbReference type="RefSeq" id="NP_001271322.1">
    <property type="nucleotide sequence ID" value="NM_001284393.1"/>
</dbReference>
<dbReference type="RefSeq" id="NP_001271326.1">
    <property type="nucleotide sequence ID" value="NM_001284397.1"/>
</dbReference>
<dbReference type="RefSeq" id="NP_075610.1">
    <property type="nucleotide sequence ID" value="NM_023121.2"/>
</dbReference>
<dbReference type="RefSeq" id="XP_006532294.1">
    <property type="nucleotide sequence ID" value="XM_006532231.3"/>
</dbReference>
<dbReference type="RefSeq" id="XP_011247039.1">
    <property type="nucleotide sequence ID" value="XM_011248737.1"/>
</dbReference>
<dbReference type="RefSeq" id="XP_017169763.1">
    <property type="nucleotide sequence ID" value="XM_017314274.1"/>
</dbReference>
<dbReference type="RefSeq" id="XP_036012231.1">
    <property type="nucleotide sequence ID" value="XM_036156338.1"/>
</dbReference>
<dbReference type="SMR" id="Q61017"/>
<dbReference type="FunCoup" id="Q61017">
    <property type="interactions" value="619"/>
</dbReference>
<dbReference type="STRING" id="10090.ENSMUSP00000047586"/>
<dbReference type="PhosphoSitePlus" id="Q61017"/>
<dbReference type="PaxDb" id="10090-ENSMUSP00000047586"/>
<dbReference type="ProteomicsDB" id="272937"/>
<dbReference type="Antibodypedia" id="30361">
    <property type="antibodies" value="93 antibodies from 22 providers"/>
</dbReference>
<dbReference type="DNASU" id="14710"/>
<dbReference type="Ensembl" id="ENSMUST00000036088.11">
    <property type="protein sequence ID" value="ENSMUSP00000047586.5"/>
    <property type="gene ID" value="ENSMUSG00000038811.14"/>
</dbReference>
<dbReference type="Ensembl" id="ENSMUST00000100532.10">
    <property type="protein sequence ID" value="ENSMUSP00000098101.4"/>
    <property type="gene ID" value="ENSMUSG00000038811.14"/>
</dbReference>
<dbReference type="Ensembl" id="ENSMUST00000107708.2">
    <property type="protein sequence ID" value="ENSMUSP00000103336.2"/>
    <property type="gene ID" value="ENSMUSG00000038811.14"/>
</dbReference>
<dbReference type="Ensembl" id="ENSMUST00000107709.8">
    <property type="protein sequence ID" value="ENSMUSP00000103337.2"/>
    <property type="gene ID" value="ENSMUSG00000038811.14"/>
</dbReference>
<dbReference type="Ensembl" id="ENSMUST00000107711.8">
    <property type="protein sequence ID" value="ENSMUSP00000103339.2"/>
    <property type="gene ID" value="ENSMUSG00000038811.14"/>
</dbReference>
<dbReference type="Ensembl" id="ENSMUST00000107712.8">
    <property type="protein sequence ID" value="ENSMUSP00000103340.2"/>
    <property type="gene ID" value="ENSMUSG00000038811.14"/>
</dbReference>
<dbReference type="Ensembl" id="ENSMUST00000107714.9">
    <property type="protein sequence ID" value="ENSMUSP00000103342.3"/>
    <property type="gene ID" value="ENSMUSG00000038811.14"/>
</dbReference>
<dbReference type="GeneID" id="14710"/>
<dbReference type="KEGG" id="mmu:14710"/>
<dbReference type="UCSC" id="uc007lau.1">
    <property type="organism name" value="mouse"/>
</dbReference>
<dbReference type="AGR" id="MGI:893584"/>
<dbReference type="CTD" id="2793"/>
<dbReference type="MGI" id="MGI:893584">
    <property type="gene designation" value="Gngt2"/>
</dbReference>
<dbReference type="VEuPathDB" id="HostDB:ENSMUSG00000038811"/>
<dbReference type="eggNOG" id="KOG4119">
    <property type="taxonomic scope" value="Eukaryota"/>
</dbReference>
<dbReference type="GeneTree" id="ENSGT01100000263525"/>
<dbReference type="HOGENOM" id="CLU_168377_2_1_1"/>
<dbReference type="InParanoid" id="Q61017"/>
<dbReference type="OMA" id="SWLEIAW"/>
<dbReference type="OrthoDB" id="9933679at2759"/>
<dbReference type="PhylomeDB" id="Q61017"/>
<dbReference type="TreeFam" id="TF319909"/>
<dbReference type="Reactome" id="R-MMU-1296041">
    <property type="pathway name" value="Activation of G protein gated Potassium channels"/>
</dbReference>
<dbReference type="Reactome" id="R-MMU-202040">
    <property type="pathway name" value="G-protein activation"/>
</dbReference>
<dbReference type="Reactome" id="R-MMU-381676">
    <property type="pathway name" value="Glucagon-like Peptide-1 (GLP1) regulates insulin secretion"/>
</dbReference>
<dbReference type="Reactome" id="R-MMU-392170">
    <property type="pathway name" value="ADP signalling through P2Y purinoceptor 12"/>
</dbReference>
<dbReference type="Reactome" id="R-MMU-392451">
    <property type="pathway name" value="G beta:gamma signalling through PI3Kgamma"/>
</dbReference>
<dbReference type="Reactome" id="R-MMU-392851">
    <property type="pathway name" value="Prostacyclin signalling through prostacyclin receptor"/>
</dbReference>
<dbReference type="Reactome" id="R-MMU-400042">
    <property type="pathway name" value="Adrenaline,noradrenaline inhibits insulin secretion"/>
</dbReference>
<dbReference type="Reactome" id="R-MMU-4086398">
    <property type="pathway name" value="Ca2+ pathway"/>
</dbReference>
<dbReference type="Reactome" id="R-MMU-416476">
    <property type="pathway name" value="G alpha (q) signalling events"/>
</dbReference>
<dbReference type="Reactome" id="R-MMU-416482">
    <property type="pathway name" value="G alpha (12/13) signalling events"/>
</dbReference>
<dbReference type="Reactome" id="R-MMU-418217">
    <property type="pathway name" value="G beta:gamma signalling through PLC beta"/>
</dbReference>
<dbReference type="Reactome" id="R-MMU-418555">
    <property type="pathway name" value="G alpha (s) signalling events"/>
</dbReference>
<dbReference type="Reactome" id="R-MMU-418592">
    <property type="pathway name" value="ADP signalling through P2Y purinoceptor 1"/>
</dbReference>
<dbReference type="Reactome" id="R-MMU-418594">
    <property type="pathway name" value="G alpha (i) signalling events"/>
</dbReference>
<dbReference type="Reactome" id="R-MMU-418597">
    <property type="pathway name" value="G alpha (z) signalling events"/>
</dbReference>
<dbReference type="Reactome" id="R-MMU-420092">
    <property type="pathway name" value="Glucagon-type ligand receptors"/>
</dbReference>
<dbReference type="Reactome" id="R-MMU-428930">
    <property type="pathway name" value="Thromboxane signalling through TP receptor"/>
</dbReference>
<dbReference type="Reactome" id="R-MMU-432040">
    <property type="pathway name" value="Vasopressin regulates renal water homeostasis via Aquaporins"/>
</dbReference>
<dbReference type="Reactome" id="R-MMU-456926">
    <property type="pathway name" value="Thrombin signalling through proteinase activated receptors (PARs)"/>
</dbReference>
<dbReference type="Reactome" id="R-MMU-500657">
    <property type="pathway name" value="Presynaptic function of Kainate receptors"/>
</dbReference>
<dbReference type="Reactome" id="R-MMU-6814122">
    <property type="pathway name" value="Cooperation of PDCL (PhLP1) and TRiC/CCT in G-protein beta folding"/>
</dbReference>
<dbReference type="Reactome" id="R-MMU-8964315">
    <property type="pathway name" value="G beta:gamma signalling through BTK"/>
</dbReference>
<dbReference type="Reactome" id="R-MMU-8964616">
    <property type="pathway name" value="G beta:gamma signalling through CDC42"/>
</dbReference>
<dbReference type="Reactome" id="R-MMU-9009391">
    <property type="pathway name" value="Extra-nuclear estrogen signaling"/>
</dbReference>
<dbReference type="Reactome" id="R-MMU-9634597">
    <property type="pathway name" value="GPER1 signaling"/>
</dbReference>
<dbReference type="Reactome" id="R-MMU-9856530">
    <property type="pathway name" value="High laminar flow shear stress activates signaling by PIEZO1 and PECAM1:CDH5:KDR in endothelial cells"/>
</dbReference>
<dbReference type="Reactome" id="R-MMU-997272">
    <property type="pathway name" value="Inhibition of voltage gated Ca2+ channels via Gbeta/gamma subunits"/>
</dbReference>
<dbReference type="BioGRID-ORCS" id="14710">
    <property type="hits" value="5 hits in 76 CRISPR screens"/>
</dbReference>
<dbReference type="ChiTaRS" id="Gngt2">
    <property type="organism name" value="mouse"/>
</dbReference>
<dbReference type="PRO" id="PR:Q61017"/>
<dbReference type="Proteomes" id="UP000000589">
    <property type="component" value="Chromosome 11"/>
</dbReference>
<dbReference type="RNAct" id="Q61017">
    <property type="molecule type" value="protein"/>
</dbReference>
<dbReference type="Bgee" id="ENSMUSG00000038811">
    <property type="expression patterns" value="Expressed in retinal neural layer and 134 other cell types or tissues"/>
</dbReference>
<dbReference type="ExpressionAtlas" id="Q61017">
    <property type="expression patterns" value="baseline and differential"/>
</dbReference>
<dbReference type="GO" id="GO:0005834">
    <property type="term" value="C:heterotrimeric G-protein complex"/>
    <property type="evidence" value="ECO:0007669"/>
    <property type="project" value="Ensembl"/>
</dbReference>
<dbReference type="GO" id="GO:0031681">
    <property type="term" value="F:G-protein beta-subunit binding"/>
    <property type="evidence" value="ECO:0007669"/>
    <property type="project" value="InterPro"/>
</dbReference>
<dbReference type="GO" id="GO:0003924">
    <property type="term" value="F:GTPase activity"/>
    <property type="evidence" value="ECO:0007669"/>
    <property type="project" value="Ensembl"/>
</dbReference>
<dbReference type="GO" id="GO:0007186">
    <property type="term" value="P:G protein-coupled receptor signaling pathway"/>
    <property type="evidence" value="ECO:0007669"/>
    <property type="project" value="InterPro"/>
</dbReference>
<dbReference type="CDD" id="cd00068">
    <property type="entry name" value="GGL"/>
    <property type="match status" value="1"/>
</dbReference>
<dbReference type="FunFam" id="4.10.260.10:FF:000001">
    <property type="entry name" value="Guanine nucleotide-binding protein subunit gamma"/>
    <property type="match status" value="1"/>
</dbReference>
<dbReference type="Gene3D" id="4.10.260.10">
    <property type="entry name" value="Transducin (heterotrimeric G protein), gamma chain"/>
    <property type="match status" value="1"/>
</dbReference>
<dbReference type="InterPro" id="IPR015898">
    <property type="entry name" value="G-protein_gamma-like_dom"/>
</dbReference>
<dbReference type="InterPro" id="IPR036284">
    <property type="entry name" value="GGL_sf"/>
</dbReference>
<dbReference type="InterPro" id="IPR001770">
    <property type="entry name" value="Gprotein-gamma"/>
</dbReference>
<dbReference type="PANTHER" id="PTHR13809">
    <property type="entry name" value="GUANINE NUCLEOTIDE-BINDING PROTEIN GAMMA SUBUNIT"/>
    <property type="match status" value="1"/>
</dbReference>
<dbReference type="Pfam" id="PF00631">
    <property type="entry name" value="G-gamma"/>
    <property type="match status" value="1"/>
</dbReference>
<dbReference type="PRINTS" id="PR00321">
    <property type="entry name" value="GPROTEING"/>
</dbReference>
<dbReference type="SMART" id="SM01224">
    <property type="entry name" value="G_gamma"/>
    <property type="match status" value="1"/>
</dbReference>
<dbReference type="SMART" id="SM00224">
    <property type="entry name" value="GGL"/>
    <property type="match status" value="1"/>
</dbReference>
<dbReference type="SUPFAM" id="SSF48670">
    <property type="entry name" value="Transducin (heterotrimeric G protein), gamma chain"/>
    <property type="match status" value="1"/>
</dbReference>
<dbReference type="PROSITE" id="PS50058">
    <property type="entry name" value="G_PROTEIN_GAMMA"/>
    <property type="match status" value="1"/>
</dbReference>
<reference key="1">
    <citation type="journal article" date="2005" name="Science">
        <title>The transcriptional landscape of the mammalian genome.</title>
        <authorList>
            <person name="Carninci P."/>
            <person name="Kasukawa T."/>
            <person name="Katayama S."/>
            <person name="Gough J."/>
            <person name="Frith M.C."/>
            <person name="Maeda N."/>
            <person name="Oyama R."/>
            <person name="Ravasi T."/>
            <person name="Lenhard B."/>
            <person name="Wells C."/>
            <person name="Kodzius R."/>
            <person name="Shimokawa K."/>
            <person name="Bajic V.B."/>
            <person name="Brenner S.E."/>
            <person name="Batalov S."/>
            <person name="Forrest A.R."/>
            <person name="Zavolan M."/>
            <person name="Davis M.J."/>
            <person name="Wilming L.G."/>
            <person name="Aidinis V."/>
            <person name="Allen J.E."/>
            <person name="Ambesi-Impiombato A."/>
            <person name="Apweiler R."/>
            <person name="Aturaliya R.N."/>
            <person name="Bailey T.L."/>
            <person name="Bansal M."/>
            <person name="Baxter L."/>
            <person name="Beisel K.W."/>
            <person name="Bersano T."/>
            <person name="Bono H."/>
            <person name="Chalk A.M."/>
            <person name="Chiu K.P."/>
            <person name="Choudhary V."/>
            <person name="Christoffels A."/>
            <person name="Clutterbuck D.R."/>
            <person name="Crowe M.L."/>
            <person name="Dalla E."/>
            <person name="Dalrymple B.P."/>
            <person name="de Bono B."/>
            <person name="Della Gatta G."/>
            <person name="di Bernardo D."/>
            <person name="Down T."/>
            <person name="Engstrom P."/>
            <person name="Fagiolini M."/>
            <person name="Faulkner G."/>
            <person name="Fletcher C.F."/>
            <person name="Fukushima T."/>
            <person name="Furuno M."/>
            <person name="Futaki S."/>
            <person name="Gariboldi M."/>
            <person name="Georgii-Hemming P."/>
            <person name="Gingeras T.R."/>
            <person name="Gojobori T."/>
            <person name="Green R.E."/>
            <person name="Gustincich S."/>
            <person name="Harbers M."/>
            <person name="Hayashi Y."/>
            <person name="Hensch T.K."/>
            <person name="Hirokawa N."/>
            <person name="Hill D."/>
            <person name="Huminiecki L."/>
            <person name="Iacono M."/>
            <person name="Ikeo K."/>
            <person name="Iwama A."/>
            <person name="Ishikawa T."/>
            <person name="Jakt M."/>
            <person name="Kanapin A."/>
            <person name="Katoh M."/>
            <person name="Kawasawa Y."/>
            <person name="Kelso J."/>
            <person name="Kitamura H."/>
            <person name="Kitano H."/>
            <person name="Kollias G."/>
            <person name="Krishnan S.P."/>
            <person name="Kruger A."/>
            <person name="Kummerfeld S.K."/>
            <person name="Kurochkin I.V."/>
            <person name="Lareau L.F."/>
            <person name="Lazarevic D."/>
            <person name="Lipovich L."/>
            <person name="Liu J."/>
            <person name="Liuni S."/>
            <person name="McWilliam S."/>
            <person name="Madan Babu M."/>
            <person name="Madera M."/>
            <person name="Marchionni L."/>
            <person name="Matsuda H."/>
            <person name="Matsuzawa S."/>
            <person name="Miki H."/>
            <person name="Mignone F."/>
            <person name="Miyake S."/>
            <person name="Morris K."/>
            <person name="Mottagui-Tabar S."/>
            <person name="Mulder N."/>
            <person name="Nakano N."/>
            <person name="Nakauchi H."/>
            <person name="Ng P."/>
            <person name="Nilsson R."/>
            <person name="Nishiguchi S."/>
            <person name="Nishikawa S."/>
            <person name="Nori F."/>
            <person name="Ohara O."/>
            <person name="Okazaki Y."/>
            <person name="Orlando V."/>
            <person name="Pang K.C."/>
            <person name="Pavan W.J."/>
            <person name="Pavesi G."/>
            <person name="Pesole G."/>
            <person name="Petrovsky N."/>
            <person name="Piazza S."/>
            <person name="Reed J."/>
            <person name="Reid J.F."/>
            <person name="Ring B.Z."/>
            <person name="Ringwald M."/>
            <person name="Rost B."/>
            <person name="Ruan Y."/>
            <person name="Salzberg S.L."/>
            <person name="Sandelin A."/>
            <person name="Schneider C."/>
            <person name="Schoenbach C."/>
            <person name="Sekiguchi K."/>
            <person name="Semple C.A."/>
            <person name="Seno S."/>
            <person name="Sessa L."/>
            <person name="Sheng Y."/>
            <person name="Shibata Y."/>
            <person name="Shimada H."/>
            <person name="Shimada K."/>
            <person name="Silva D."/>
            <person name="Sinclair B."/>
            <person name="Sperling S."/>
            <person name="Stupka E."/>
            <person name="Sugiura K."/>
            <person name="Sultana R."/>
            <person name="Takenaka Y."/>
            <person name="Taki K."/>
            <person name="Tammoja K."/>
            <person name="Tan S.L."/>
            <person name="Tang S."/>
            <person name="Taylor M.S."/>
            <person name="Tegner J."/>
            <person name="Teichmann S.A."/>
            <person name="Ueda H.R."/>
            <person name="van Nimwegen E."/>
            <person name="Verardo R."/>
            <person name="Wei C.L."/>
            <person name="Yagi K."/>
            <person name="Yamanishi H."/>
            <person name="Zabarovsky E."/>
            <person name="Zhu S."/>
            <person name="Zimmer A."/>
            <person name="Hide W."/>
            <person name="Bult C."/>
            <person name="Grimmond S.M."/>
            <person name="Teasdale R.D."/>
            <person name="Liu E.T."/>
            <person name="Brusic V."/>
            <person name="Quackenbush J."/>
            <person name="Wahlestedt C."/>
            <person name="Mattick J.S."/>
            <person name="Hume D.A."/>
            <person name="Kai C."/>
            <person name="Sasaki D."/>
            <person name="Tomaru Y."/>
            <person name="Fukuda S."/>
            <person name="Kanamori-Katayama M."/>
            <person name="Suzuki M."/>
            <person name="Aoki J."/>
            <person name="Arakawa T."/>
            <person name="Iida J."/>
            <person name="Imamura K."/>
            <person name="Itoh M."/>
            <person name="Kato T."/>
            <person name="Kawaji H."/>
            <person name="Kawagashira N."/>
            <person name="Kawashima T."/>
            <person name="Kojima M."/>
            <person name="Kondo S."/>
            <person name="Konno H."/>
            <person name="Nakano K."/>
            <person name="Ninomiya N."/>
            <person name="Nishio T."/>
            <person name="Okada M."/>
            <person name="Plessy C."/>
            <person name="Shibata K."/>
            <person name="Shiraki T."/>
            <person name="Suzuki S."/>
            <person name="Tagami M."/>
            <person name="Waki K."/>
            <person name="Watahiki A."/>
            <person name="Okamura-Oho Y."/>
            <person name="Suzuki H."/>
            <person name="Kawai J."/>
            <person name="Hayashizaki Y."/>
        </authorList>
    </citation>
    <scope>NUCLEOTIDE SEQUENCE [LARGE SCALE MRNA]</scope>
    <source>
        <strain>C57BL/6J</strain>
    </source>
</reference>
<reference key="2">
    <citation type="journal article" date="1996" name="Mol. Reprod. Dev.">
        <title>G protein gene expression during mouse oocyte growth and maturation, and preimplantation embryo development.</title>
        <authorList>
            <person name="Williams C.J."/>
            <person name="Schultz R.M."/>
            <person name="Kopf G.S."/>
        </authorList>
    </citation>
    <scope>NUCLEOTIDE SEQUENCE [MRNA] OF 20-54</scope>
    <source>
        <strain>CF-1 / Harlan</strain>
        <tissue>Retina</tissue>
    </source>
</reference>
<protein>
    <recommendedName>
        <fullName>Guanine nucleotide-binding protein G(I)/G(S)/G(O) subunit gamma-T2</fullName>
    </recommendedName>
    <alternativeName>
        <fullName>G gamma-C</fullName>
    </alternativeName>
    <alternativeName>
        <fullName>G-gamma-8</fullName>
    </alternativeName>
</protein>
<evidence type="ECO:0000250" key="1"/>
<evidence type="ECO:0000305" key="2"/>
<gene>
    <name type="primary">Gngt2</name>
    <name type="synonym">Gng8</name>
    <name type="synonym">Gngt8</name>
</gene>
<organism>
    <name type="scientific">Mus musculus</name>
    <name type="common">Mouse</name>
    <dbReference type="NCBI Taxonomy" id="10090"/>
    <lineage>
        <taxon>Eukaryota</taxon>
        <taxon>Metazoa</taxon>
        <taxon>Chordata</taxon>
        <taxon>Craniata</taxon>
        <taxon>Vertebrata</taxon>
        <taxon>Euteleostomi</taxon>
        <taxon>Mammalia</taxon>
        <taxon>Eutheria</taxon>
        <taxon>Euarchontoglires</taxon>
        <taxon>Glires</taxon>
        <taxon>Rodentia</taxon>
        <taxon>Myomorpha</taxon>
        <taxon>Muroidea</taxon>
        <taxon>Muridae</taxon>
        <taxon>Murinae</taxon>
        <taxon>Mus</taxon>
        <taxon>Mus</taxon>
    </lineage>
</organism>
<feature type="chain" id="PRO_0000012647" description="Guanine nucleotide-binding protein G(I)/G(S)/G(O) subunit gamma-T2">
    <location>
        <begin position="1"/>
        <end position="66"/>
    </location>
</feature>
<feature type="propeptide" id="PRO_0000012648" description="Removed in mature form" evidence="1">
    <location>
        <begin position="67"/>
        <end position="69"/>
    </location>
</feature>
<feature type="modified residue" description="Cysteine methyl ester" evidence="1">
    <location>
        <position position="66"/>
    </location>
</feature>
<feature type="lipid moiety-binding region" description="S-farnesyl cysteine" evidence="1">
    <location>
        <position position="66"/>
    </location>
</feature>
<sequence length="69" mass="7802">MAQDLSEKELLRMEVEQLKKEVKNPRDLISKTGKEIKDYVEAQAGTDPLLKGIPEDKNPFKEKGTCVLS</sequence>
<name>GBGT2_MOUSE</name>
<comment type="function">
    <text>Guanine nucleotide-binding proteins (G proteins) are involved as a modulator or transducer in various transmembrane signaling systems. The beta and gamma chains are required for the GTPase activity, for replacement of GDP by GTP, and for G protein-effector interaction.</text>
</comment>
<comment type="subunit">
    <text>G proteins are composed of 3 units, alpha, beta and gamma.</text>
</comment>
<comment type="subcellular location">
    <subcellularLocation>
        <location evidence="2">Cell membrane</location>
        <topology evidence="2">Lipid-anchor</topology>
        <orientation evidence="2">Cytoplasmic side</orientation>
    </subcellularLocation>
</comment>
<comment type="similarity">
    <text evidence="2">Belongs to the G protein gamma family.</text>
</comment>